<protein>
    <recommendedName>
        <fullName evidence="1">Protein translocase subunit SecA</fullName>
        <ecNumber evidence="1">7.4.2.8</ecNumber>
    </recommendedName>
</protein>
<reference key="1">
    <citation type="submission" date="2006-03" db="EMBL/GenBank/DDBJ databases">
        <title>Complete sequence of Shewanella denitrificans OS217.</title>
        <authorList>
            <consortium name="US DOE Joint Genome Institute"/>
            <person name="Copeland A."/>
            <person name="Lucas S."/>
            <person name="Lapidus A."/>
            <person name="Barry K."/>
            <person name="Detter J.C."/>
            <person name="Glavina del Rio T."/>
            <person name="Hammon N."/>
            <person name="Israni S."/>
            <person name="Dalin E."/>
            <person name="Tice H."/>
            <person name="Pitluck S."/>
            <person name="Brettin T."/>
            <person name="Bruce D."/>
            <person name="Han C."/>
            <person name="Tapia R."/>
            <person name="Gilna P."/>
            <person name="Kiss H."/>
            <person name="Schmutz J."/>
            <person name="Larimer F."/>
            <person name="Land M."/>
            <person name="Hauser L."/>
            <person name="Kyrpides N."/>
            <person name="Lykidis A."/>
            <person name="Richardson P."/>
        </authorList>
    </citation>
    <scope>NUCLEOTIDE SEQUENCE [LARGE SCALE GENOMIC DNA]</scope>
    <source>
        <strain>OS217 / ATCC BAA-1090 / DSM 15013</strain>
    </source>
</reference>
<comment type="function">
    <text evidence="1">Part of the Sec protein translocase complex. Interacts with the SecYEG preprotein conducting channel. Has a central role in coupling the hydrolysis of ATP to the transfer of proteins into and across the cell membrane, serving both as a receptor for the preprotein-SecB complex and as an ATP-driven molecular motor driving the stepwise translocation of polypeptide chains across the membrane.</text>
</comment>
<comment type="catalytic activity">
    <reaction evidence="1">
        <text>ATP + H2O + cellular proteinSide 1 = ADP + phosphate + cellular proteinSide 2.</text>
        <dbReference type="EC" id="7.4.2.8"/>
    </reaction>
</comment>
<comment type="cofactor">
    <cofactor evidence="1">
        <name>Zn(2+)</name>
        <dbReference type="ChEBI" id="CHEBI:29105"/>
    </cofactor>
    <text evidence="1">May bind 1 zinc ion per subunit.</text>
</comment>
<comment type="subunit">
    <text evidence="1">Monomer and homodimer. Part of the essential Sec protein translocation apparatus which comprises SecA, SecYEG and auxiliary proteins SecDF-YajC and YidC.</text>
</comment>
<comment type="subcellular location">
    <subcellularLocation>
        <location evidence="1">Cell inner membrane</location>
        <topology evidence="1">Peripheral membrane protein</topology>
        <orientation evidence="1">Cytoplasmic side</orientation>
    </subcellularLocation>
    <subcellularLocation>
        <location evidence="1">Cytoplasm</location>
    </subcellularLocation>
    <text evidence="1">Distribution is 50-50.</text>
</comment>
<comment type="similarity">
    <text evidence="1">Belongs to the SecA family.</text>
</comment>
<proteinExistence type="inferred from homology"/>
<feature type="chain" id="PRO_0000320992" description="Protein translocase subunit SecA">
    <location>
        <begin position="1"/>
        <end position="907"/>
    </location>
</feature>
<feature type="region of interest" description="Disordered" evidence="2">
    <location>
        <begin position="834"/>
        <end position="907"/>
    </location>
</feature>
<feature type="compositionally biased region" description="Basic and acidic residues" evidence="2">
    <location>
        <begin position="840"/>
        <end position="856"/>
    </location>
</feature>
<feature type="compositionally biased region" description="Polar residues" evidence="2">
    <location>
        <begin position="865"/>
        <end position="876"/>
    </location>
</feature>
<feature type="compositionally biased region" description="Basic and acidic residues" evidence="2">
    <location>
        <begin position="878"/>
        <end position="887"/>
    </location>
</feature>
<feature type="compositionally biased region" description="Basic residues" evidence="2">
    <location>
        <begin position="897"/>
        <end position="907"/>
    </location>
</feature>
<feature type="binding site" evidence="1">
    <location>
        <position position="87"/>
    </location>
    <ligand>
        <name>ATP</name>
        <dbReference type="ChEBI" id="CHEBI:30616"/>
    </ligand>
</feature>
<feature type="binding site" evidence="1">
    <location>
        <begin position="105"/>
        <end position="109"/>
    </location>
    <ligand>
        <name>ATP</name>
        <dbReference type="ChEBI" id="CHEBI:30616"/>
    </ligand>
</feature>
<feature type="binding site" evidence="1">
    <location>
        <position position="512"/>
    </location>
    <ligand>
        <name>ATP</name>
        <dbReference type="ChEBI" id="CHEBI:30616"/>
    </ligand>
</feature>
<feature type="binding site" evidence="1">
    <location>
        <position position="891"/>
    </location>
    <ligand>
        <name>Zn(2+)</name>
        <dbReference type="ChEBI" id="CHEBI:29105"/>
    </ligand>
</feature>
<feature type="binding site" evidence="1">
    <location>
        <position position="893"/>
    </location>
    <ligand>
        <name>Zn(2+)</name>
        <dbReference type="ChEBI" id="CHEBI:29105"/>
    </ligand>
</feature>
<feature type="binding site" evidence="1">
    <location>
        <position position="902"/>
    </location>
    <ligand>
        <name>Zn(2+)</name>
        <dbReference type="ChEBI" id="CHEBI:29105"/>
    </ligand>
</feature>
<feature type="binding site" evidence="1">
    <location>
        <position position="903"/>
    </location>
    <ligand>
        <name>Zn(2+)</name>
        <dbReference type="ChEBI" id="CHEBI:29105"/>
    </ligand>
</feature>
<keyword id="KW-0067">ATP-binding</keyword>
<keyword id="KW-0997">Cell inner membrane</keyword>
<keyword id="KW-1003">Cell membrane</keyword>
<keyword id="KW-0963">Cytoplasm</keyword>
<keyword id="KW-0472">Membrane</keyword>
<keyword id="KW-0479">Metal-binding</keyword>
<keyword id="KW-0547">Nucleotide-binding</keyword>
<keyword id="KW-0653">Protein transport</keyword>
<keyword id="KW-1185">Reference proteome</keyword>
<keyword id="KW-1278">Translocase</keyword>
<keyword id="KW-0811">Translocation</keyword>
<keyword id="KW-0813">Transport</keyword>
<keyword id="KW-0862">Zinc</keyword>
<accession>Q12SB8</accession>
<organism>
    <name type="scientific">Shewanella denitrificans (strain OS217 / ATCC BAA-1090 / DSM 15013)</name>
    <dbReference type="NCBI Taxonomy" id="318161"/>
    <lineage>
        <taxon>Bacteria</taxon>
        <taxon>Pseudomonadati</taxon>
        <taxon>Pseudomonadota</taxon>
        <taxon>Gammaproteobacteria</taxon>
        <taxon>Alteromonadales</taxon>
        <taxon>Shewanellaceae</taxon>
        <taxon>Shewanella</taxon>
    </lineage>
</organism>
<sequence>MLGKLLTKLFGSRNDRTLKNLGKIVTQINALEADFQKLSDDELKAKTLEFRERLEKGETLDDIMAEAFATVREASVRVFEMRPFDVQLLGGMVLNSNRIAEMRTGEGKTLTATLPAYLNGLSGKGVHVITVNDYLAGRDAENNRPLFEFLGLTVGINVAGIGQAEKKMAYAADITYGTNNEFGFDYLRDNMAFSPQERVQRPLHYALIDEVDSILIDEARTPLIISGAAEDSSEHYRKVNVLIPSLIRQEKEDTEDEVGEGDYSIDEKGKQVHLTERGQEKVELLLIESGMLAEGDSLYSAANISLLHHVNAALRAHTLFEKDVDYIVQDNEVIIVDEHTGRTMPGRRWSEGLHQAVEAKEGVHIQNENQTLASITFQNYFRQYEKLAGMTGTADTEAFEFQHIYGLDTVVVPTNKPMVRNDMADLVYLTASEKYAAIIKDVEGCRERGQPVLVGTVSIEQSELLASLLKNAKIPHSVLNAKFHEKEAEIVAQAGRTGAVTIATNMAGRGTDIVLGGNWKVEIENLTNPTDEQIAKIRADWQIHHDAVIAAGGLHILGTERHESRRIDNQLRGRSGRQGDAGSSRFYLSMEDSLMRIFASERVSGMMKKLGMEEGEAIEHPWVSRAIENAQRKVEARNFDIRKQLLEYDDVANDQRQVVYSQRNELMDATSIQDTIKNIEADVINDLVDQYIPRQSLEELWDVPGLEQRFHQEFGIQLPIQQWLEKEEDLHEETLRERIVASWSDAYQAKEAMVGADVLRQFEKAVMLQTLDGLWKEHLAAMDHLRQGIHLRGYAQKNPKQEYKRESFELFQQMLDSLKHDVISVLSKVQVQAQSDVDDMEQRRREEEAKIQRDYQHAAAEALTDESQASSDNTPKTMIREGDKVGRNDPCPCGSGKKYKQCHGKLS</sequence>
<dbReference type="EC" id="7.4.2.8" evidence="1"/>
<dbReference type="EMBL" id="CP000302">
    <property type="protein sequence ID" value="ABE53658.1"/>
    <property type="molecule type" value="Genomic_DNA"/>
</dbReference>
<dbReference type="RefSeq" id="WP_011494825.1">
    <property type="nucleotide sequence ID" value="NC_007954.1"/>
</dbReference>
<dbReference type="SMR" id="Q12SB8"/>
<dbReference type="STRING" id="318161.Sden_0363"/>
<dbReference type="KEGG" id="sdn:Sden_0363"/>
<dbReference type="eggNOG" id="COG0653">
    <property type="taxonomic scope" value="Bacteria"/>
</dbReference>
<dbReference type="HOGENOM" id="CLU_005314_3_0_6"/>
<dbReference type="OrthoDB" id="9805579at2"/>
<dbReference type="Proteomes" id="UP000001982">
    <property type="component" value="Chromosome"/>
</dbReference>
<dbReference type="GO" id="GO:0031522">
    <property type="term" value="C:cell envelope Sec protein transport complex"/>
    <property type="evidence" value="ECO:0007669"/>
    <property type="project" value="TreeGrafter"/>
</dbReference>
<dbReference type="GO" id="GO:0005829">
    <property type="term" value="C:cytosol"/>
    <property type="evidence" value="ECO:0007669"/>
    <property type="project" value="TreeGrafter"/>
</dbReference>
<dbReference type="GO" id="GO:0005886">
    <property type="term" value="C:plasma membrane"/>
    <property type="evidence" value="ECO:0007669"/>
    <property type="project" value="UniProtKB-SubCell"/>
</dbReference>
<dbReference type="GO" id="GO:0005524">
    <property type="term" value="F:ATP binding"/>
    <property type="evidence" value="ECO:0007669"/>
    <property type="project" value="UniProtKB-UniRule"/>
</dbReference>
<dbReference type="GO" id="GO:0046872">
    <property type="term" value="F:metal ion binding"/>
    <property type="evidence" value="ECO:0007669"/>
    <property type="project" value="UniProtKB-KW"/>
</dbReference>
<dbReference type="GO" id="GO:0008564">
    <property type="term" value="F:protein-exporting ATPase activity"/>
    <property type="evidence" value="ECO:0007669"/>
    <property type="project" value="UniProtKB-EC"/>
</dbReference>
<dbReference type="GO" id="GO:0065002">
    <property type="term" value="P:intracellular protein transmembrane transport"/>
    <property type="evidence" value="ECO:0007669"/>
    <property type="project" value="UniProtKB-UniRule"/>
</dbReference>
<dbReference type="GO" id="GO:0017038">
    <property type="term" value="P:protein import"/>
    <property type="evidence" value="ECO:0007669"/>
    <property type="project" value="InterPro"/>
</dbReference>
<dbReference type="GO" id="GO:0006605">
    <property type="term" value="P:protein targeting"/>
    <property type="evidence" value="ECO:0007669"/>
    <property type="project" value="UniProtKB-UniRule"/>
</dbReference>
<dbReference type="GO" id="GO:0043952">
    <property type="term" value="P:protein transport by the Sec complex"/>
    <property type="evidence" value="ECO:0007669"/>
    <property type="project" value="TreeGrafter"/>
</dbReference>
<dbReference type="CDD" id="cd17928">
    <property type="entry name" value="DEXDc_SecA"/>
    <property type="match status" value="1"/>
</dbReference>
<dbReference type="CDD" id="cd18803">
    <property type="entry name" value="SF2_C_secA"/>
    <property type="match status" value="1"/>
</dbReference>
<dbReference type="FunFam" id="1.10.3060.10:FF:000001">
    <property type="entry name" value="Preprotein translocase subunit SecA"/>
    <property type="match status" value="1"/>
</dbReference>
<dbReference type="FunFam" id="3.40.50.300:FF:000113">
    <property type="entry name" value="Preprotein translocase subunit SecA"/>
    <property type="match status" value="1"/>
</dbReference>
<dbReference type="FunFam" id="3.90.1440.10:FF:000001">
    <property type="entry name" value="Preprotein translocase subunit SecA"/>
    <property type="match status" value="1"/>
</dbReference>
<dbReference type="Gene3D" id="1.10.3060.10">
    <property type="entry name" value="Helical scaffold and wing domains of SecA"/>
    <property type="match status" value="1"/>
</dbReference>
<dbReference type="Gene3D" id="3.40.50.300">
    <property type="entry name" value="P-loop containing nucleotide triphosphate hydrolases"/>
    <property type="match status" value="2"/>
</dbReference>
<dbReference type="Gene3D" id="3.90.1440.10">
    <property type="entry name" value="SecA, preprotein cross-linking domain"/>
    <property type="match status" value="1"/>
</dbReference>
<dbReference type="HAMAP" id="MF_01382">
    <property type="entry name" value="SecA"/>
    <property type="match status" value="1"/>
</dbReference>
<dbReference type="InterPro" id="IPR014001">
    <property type="entry name" value="Helicase_ATP-bd"/>
</dbReference>
<dbReference type="InterPro" id="IPR001650">
    <property type="entry name" value="Helicase_C-like"/>
</dbReference>
<dbReference type="InterPro" id="IPR027417">
    <property type="entry name" value="P-loop_NTPase"/>
</dbReference>
<dbReference type="InterPro" id="IPR004027">
    <property type="entry name" value="SEC_C_motif"/>
</dbReference>
<dbReference type="InterPro" id="IPR000185">
    <property type="entry name" value="SecA"/>
</dbReference>
<dbReference type="InterPro" id="IPR020937">
    <property type="entry name" value="SecA_CS"/>
</dbReference>
<dbReference type="InterPro" id="IPR011115">
    <property type="entry name" value="SecA_DEAD"/>
</dbReference>
<dbReference type="InterPro" id="IPR014018">
    <property type="entry name" value="SecA_motor_DEAD"/>
</dbReference>
<dbReference type="InterPro" id="IPR011130">
    <property type="entry name" value="SecA_preprotein_X-link_dom"/>
</dbReference>
<dbReference type="InterPro" id="IPR044722">
    <property type="entry name" value="SecA_SF2_C"/>
</dbReference>
<dbReference type="InterPro" id="IPR011116">
    <property type="entry name" value="SecA_Wing/Scaffold"/>
</dbReference>
<dbReference type="InterPro" id="IPR036266">
    <property type="entry name" value="SecA_Wing/Scaffold_sf"/>
</dbReference>
<dbReference type="InterPro" id="IPR036670">
    <property type="entry name" value="SecA_X-link_sf"/>
</dbReference>
<dbReference type="NCBIfam" id="NF009538">
    <property type="entry name" value="PRK12904.1"/>
    <property type="match status" value="1"/>
</dbReference>
<dbReference type="NCBIfam" id="TIGR00963">
    <property type="entry name" value="secA"/>
    <property type="match status" value="1"/>
</dbReference>
<dbReference type="PANTHER" id="PTHR30612:SF0">
    <property type="entry name" value="CHLOROPLAST PROTEIN-TRANSPORTING ATPASE"/>
    <property type="match status" value="1"/>
</dbReference>
<dbReference type="PANTHER" id="PTHR30612">
    <property type="entry name" value="SECA INNER MEMBRANE COMPONENT OF SEC PROTEIN SECRETION SYSTEM"/>
    <property type="match status" value="1"/>
</dbReference>
<dbReference type="Pfam" id="PF21090">
    <property type="entry name" value="P-loop_SecA"/>
    <property type="match status" value="1"/>
</dbReference>
<dbReference type="Pfam" id="PF02810">
    <property type="entry name" value="SEC-C"/>
    <property type="match status" value="1"/>
</dbReference>
<dbReference type="Pfam" id="PF07517">
    <property type="entry name" value="SecA_DEAD"/>
    <property type="match status" value="1"/>
</dbReference>
<dbReference type="Pfam" id="PF01043">
    <property type="entry name" value="SecA_PP_bind"/>
    <property type="match status" value="1"/>
</dbReference>
<dbReference type="Pfam" id="PF07516">
    <property type="entry name" value="SecA_SW"/>
    <property type="match status" value="1"/>
</dbReference>
<dbReference type="PRINTS" id="PR00906">
    <property type="entry name" value="SECA"/>
</dbReference>
<dbReference type="SMART" id="SM00957">
    <property type="entry name" value="SecA_DEAD"/>
    <property type="match status" value="1"/>
</dbReference>
<dbReference type="SMART" id="SM00958">
    <property type="entry name" value="SecA_PP_bind"/>
    <property type="match status" value="1"/>
</dbReference>
<dbReference type="SUPFAM" id="SSF81886">
    <property type="entry name" value="Helical scaffold and wing domains of SecA"/>
    <property type="match status" value="1"/>
</dbReference>
<dbReference type="SUPFAM" id="SSF52540">
    <property type="entry name" value="P-loop containing nucleoside triphosphate hydrolases"/>
    <property type="match status" value="2"/>
</dbReference>
<dbReference type="SUPFAM" id="SSF81767">
    <property type="entry name" value="Pre-protein crosslinking domain of SecA"/>
    <property type="match status" value="1"/>
</dbReference>
<dbReference type="PROSITE" id="PS01312">
    <property type="entry name" value="SECA"/>
    <property type="match status" value="1"/>
</dbReference>
<dbReference type="PROSITE" id="PS51196">
    <property type="entry name" value="SECA_MOTOR_DEAD"/>
    <property type="match status" value="1"/>
</dbReference>
<name>SECA_SHEDO</name>
<gene>
    <name evidence="1" type="primary">secA</name>
    <name type="ordered locus">Sden_0363</name>
</gene>
<evidence type="ECO:0000255" key="1">
    <source>
        <dbReference type="HAMAP-Rule" id="MF_01382"/>
    </source>
</evidence>
<evidence type="ECO:0000256" key="2">
    <source>
        <dbReference type="SAM" id="MobiDB-lite"/>
    </source>
</evidence>